<keyword id="KW-0028">Amino-acid biosynthesis</keyword>
<keyword id="KW-0057">Aromatic amino acid biosynthesis</keyword>
<keyword id="KW-0521">NADP</keyword>
<keyword id="KW-0560">Oxidoreductase</keyword>
<name>AROE_CERS5</name>
<feature type="chain" id="PRO_1000021325" description="Shikimate dehydrogenase (NADP(+))">
    <location>
        <begin position="1"/>
        <end position="279"/>
    </location>
</feature>
<feature type="active site" description="Proton acceptor" evidence="1">
    <location>
        <position position="71"/>
    </location>
</feature>
<feature type="binding site" evidence="1">
    <location>
        <begin position="20"/>
        <end position="22"/>
    </location>
    <ligand>
        <name>shikimate</name>
        <dbReference type="ChEBI" id="CHEBI:36208"/>
    </ligand>
</feature>
<feature type="binding site" evidence="1">
    <location>
        <position position="67"/>
    </location>
    <ligand>
        <name>shikimate</name>
        <dbReference type="ChEBI" id="CHEBI:36208"/>
    </ligand>
</feature>
<feature type="binding site" evidence="1">
    <location>
        <position position="83"/>
    </location>
    <ligand>
        <name>NADP(+)</name>
        <dbReference type="ChEBI" id="CHEBI:58349"/>
    </ligand>
</feature>
<feature type="binding site" evidence="1">
    <location>
        <position position="92"/>
    </location>
    <ligand>
        <name>shikimate</name>
        <dbReference type="ChEBI" id="CHEBI:36208"/>
    </ligand>
</feature>
<feature type="binding site" evidence="1">
    <location>
        <position position="108"/>
    </location>
    <ligand>
        <name>shikimate</name>
        <dbReference type="ChEBI" id="CHEBI:36208"/>
    </ligand>
</feature>
<feature type="binding site" evidence="1">
    <location>
        <begin position="134"/>
        <end position="138"/>
    </location>
    <ligand>
        <name>NADP(+)</name>
        <dbReference type="ChEBI" id="CHEBI:58349"/>
    </ligand>
</feature>
<feature type="binding site" evidence="1">
    <location>
        <position position="223"/>
    </location>
    <ligand>
        <name>NADP(+)</name>
        <dbReference type="ChEBI" id="CHEBI:58349"/>
    </ligand>
</feature>
<feature type="binding site" evidence="1">
    <location>
        <position position="225"/>
    </location>
    <ligand>
        <name>shikimate</name>
        <dbReference type="ChEBI" id="CHEBI:36208"/>
    </ligand>
</feature>
<feature type="binding site" evidence="1">
    <location>
        <position position="246"/>
    </location>
    <ligand>
        <name>NADP(+)</name>
        <dbReference type="ChEBI" id="CHEBI:58349"/>
    </ligand>
</feature>
<dbReference type="EC" id="1.1.1.25" evidence="1"/>
<dbReference type="EMBL" id="CP000661">
    <property type="protein sequence ID" value="ABP71558.1"/>
    <property type="molecule type" value="Genomic_DNA"/>
</dbReference>
<dbReference type="SMR" id="A4WVZ4"/>
<dbReference type="STRING" id="349102.Rsph17025_2671"/>
<dbReference type="KEGG" id="rsq:Rsph17025_2671"/>
<dbReference type="eggNOG" id="COG0169">
    <property type="taxonomic scope" value="Bacteria"/>
</dbReference>
<dbReference type="HOGENOM" id="CLU_044063_2_0_5"/>
<dbReference type="BioCyc" id="RSPH349102:G1G8M-2751-MONOMER"/>
<dbReference type="UniPathway" id="UPA00053">
    <property type="reaction ID" value="UER00087"/>
</dbReference>
<dbReference type="GO" id="GO:0005829">
    <property type="term" value="C:cytosol"/>
    <property type="evidence" value="ECO:0007669"/>
    <property type="project" value="TreeGrafter"/>
</dbReference>
<dbReference type="GO" id="GO:0050661">
    <property type="term" value="F:NADP binding"/>
    <property type="evidence" value="ECO:0007669"/>
    <property type="project" value="InterPro"/>
</dbReference>
<dbReference type="GO" id="GO:0004764">
    <property type="term" value="F:shikimate 3-dehydrogenase (NADP+) activity"/>
    <property type="evidence" value="ECO:0007669"/>
    <property type="project" value="UniProtKB-UniRule"/>
</dbReference>
<dbReference type="GO" id="GO:0008652">
    <property type="term" value="P:amino acid biosynthetic process"/>
    <property type="evidence" value="ECO:0007669"/>
    <property type="project" value="UniProtKB-KW"/>
</dbReference>
<dbReference type="GO" id="GO:0009073">
    <property type="term" value="P:aromatic amino acid family biosynthetic process"/>
    <property type="evidence" value="ECO:0007669"/>
    <property type="project" value="UniProtKB-KW"/>
</dbReference>
<dbReference type="GO" id="GO:0009423">
    <property type="term" value="P:chorismate biosynthetic process"/>
    <property type="evidence" value="ECO:0007669"/>
    <property type="project" value="UniProtKB-UniRule"/>
</dbReference>
<dbReference type="GO" id="GO:0019632">
    <property type="term" value="P:shikimate metabolic process"/>
    <property type="evidence" value="ECO:0007669"/>
    <property type="project" value="InterPro"/>
</dbReference>
<dbReference type="CDD" id="cd01065">
    <property type="entry name" value="NAD_bind_Shikimate_DH"/>
    <property type="match status" value="1"/>
</dbReference>
<dbReference type="Gene3D" id="3.40.50.10860">
    <property type="entry name" value="Leucine Dehydrogenase, chain A, domain 1"/>
    <property type="match status" value="1"/>
</dbReference>
<dbReference type="Gene3D" id="3.40.50.720">
    <property type="entry name" value="NAD(P)-binding Rossmann-like Domain"/>
    <property type="match status" value="1"/>
</dbReference>
<dbReference type="HAMAP" id="MF_00222">
    <property type="entry name" value="Shikimate_DH_AroE"/>
    <property type="match status" value="1"/>
</dbReference>
<dbReference type="InterPro" id="IPR046346">
    <property type="entry name" value="Aminoacid_DH-like_N_sf"/>
</dbReference>
<dbReference type="InterPro" id="IPR036291">
    <property type="entry name" value="NAD(P)-bd_dom_sf"/>
</dbReference>
<dbReference type="InterPro" id="IPR041121">
    <property type="entry name" value="SDH_C"/>
</dbReference>
<dbReference type="InterPro" id="IPR011342">
    <property type="entry name" value="Shikimate_DH"/>
</dbReference>
<dbReference type="InterPro" id="IPR013708">
    <property type="entry name" value="Shikimate_DH-bd_N"/>
</dbReference>
<dbReference type="InterPro" id="IPR022893">
    <property type="entry name" value="Shikimate_DH_fam"/>
</dbReference>
<dbReference type="InterPro" id="IPR006151">
    <property type="entry name" value="Shikm_DH/Glu-tRNA_Rdtase"/>
</dbReference>
<dbReference type="NCBIfam" id="TIGR00507">
    <property type="entry name" value="aroE"/>
    <property type="match status" value="1"/>
</dbReference>
<dbReference type="NCBIfam" id="NF001312">
    <property type="entry name" value="PRK00258.1-4"/>
    <property type="match status" value="1"/>
</dbReference>
<dbReference type="PANTHER" id="PTHR21089:SF1">
    <property type="entry name" value="BIFUNCTIONAL 3-DEHYDROQUINATE DEHYDRATASE_SHIKIMATE DEHYDROGENASE, CHLOROPLASTIC"/>
    <property type="match status" value="1"/>
</dbReference>
<dbReference type="PANTHER" id="PTHR21089">
    <property type="entry name" value="SHIKIMATE DEHYDROGENASE"/>
    <property type="match status" value="1"/>
</dbReference>
<dbReference type="Pfam" id="PF18317">
    <property type="entry name" value="SDH_C"/>
    <property type="match status" value="1"/>
</dbReference>
<dbReference type="Pfam" id="PF01488">
    <property type="entry name" value="Shikimate_DH"/>
    <property type="match status" value="1"/>
</dbReference>
<dbReference type="Pfam" id="PF08501">
    <property type="entry name" value="Shikimate_dh_N"/>
    <property type="match status" value="1"/>
</dbReference>
<dbReference type="SUPFAM" id="SSF53223">
    <property type="entry name" value="Aminoacid dehydrogenase-like, N-terminal domain"/>
    <property type="match status" value="1"/>
</dbReference>
<dbReference type="SUPFAM" id="SSF51735">
    <property type="entry name" value="NAD(P)-binding Rossmann-fold domains"/>
    <property type="match status" value="1"/>
</dbReference>
<comment type="function">
    <text evidence="1">Involved in the biosynthesis of the chorismate, which leads to the biosynthesis of aromatic amino acids. Catalyzes the reversible NADPH linked reduction of 3-dehydroshikimate (DHSA) to yield shikimate (SA).</text>
</comment>
<comment type="catalytic activity">
    <reaction evidence="1">
        <text>shikimate + NADP(+) = 3-dehydroshikimate + NADPH + H(+)</text>
        <dbReference type="Rhea" id="RHEA:17737"/>
        <dbReference type="ChEBI" id="CHEBI:15378"/>
        <dbReference type="ChEBI" id="CHEBI:16630"/>
        <dbReference type="ChEBI" id="CHEBI:36208"/>
        <dbReference type="ChEBI" id="CHEBI:57783"/>
        <dbReference type="ChEBI" id="CHEBI:58349"/>
        <dbReference type="EC" id="1.1.1.25"/>
    </reaction>
</comment>
<comment type="pathway">
    <text evidence="1">Metabolic intermediate biosynthesis; chorismate biosynthesis; chorismate from D-erythrose 4-phosphate and phosphoenolpyruvate: step 4/7.</text>
</comment>
<comment type="subunit">
    <text evidence="1">Homodimer.</text>
</comment>
<comment type="similarity">
    <text evidence="1">Belongs to the shikimate dehydrogenase family.</text>
</comment>
<gene>
    <name evidence="1" type="primary">aroE</name>
    <name type="ordered locus">Rsph17025_2671</name>
</gene>
<organism>
    <name type="scientific">Cereibacter sphaeroides (strain ATCC 17025 / ATH 2.4.3)</name>
    <name type="common">Rhodobacter sphaeroides</name>
    <dbReference type="NCBI Taxonomy" id="349102"/>
    <lineage>
        <taxon>Bacteria</taxon>
        <taxon>Pseudomonadati</taxon>
        <taxon>Pseudomonadota</taxon>
        <taxon>Alphaproteobacteria</taxon>
        <taxon>Rhodobacterales</taxon>
        <taxon>Paracoccaceae</taxon>
        <taxon>Cereibacter</taxon>
    </lineage>
</organism>
<accession>A4WVZ4</accession>
<evidence type="ECO:0000255" key="1">
    <source>
        <dbReference type="HAMAP-Rule" id="MF_00222"/>
    </source>
</evidence>
<reference key="1">
    <citation type="submission" date="2007-04" db="EMBL/GenBank/DDBJ databases">
        <title>Complete sequence of chromosome of Rhodobacter sphaeroides ATCC 17025.</title>
        <authorList>
            <consortium name="US DOE Joint Genome Institute"/>
            <person name="Copeland A."/>
            <person name="Lucas S."/>
            <person name="Lapidus A."/>
            <person name="Barry K."/>
            <person name="Detter J.C."/>
            <person name="Glavina del Rio T."/>
            <person name="Hammon N."/>
            <person name="Israni S."/>
            <person name="Dalin E."/>
            <person name="Tice H."/>
            <person name="Pitluck S."/>
            <person name="Chertkov O."/>
            <person name="Brettin T."/>
            <person name="Bruce D."/>
            <person name="Han C."/>
            <person name="Schmutz J."/>
            <person name="Larimer F."/>
            <person name="Land M."/>
            <person name="Hauser L."/>
            <person name="Kyrpides N."/>
            <person name="Kim E."/>
            <person name="Richardson P."/>
            <person name="Mackenzie C."/>
            <person name="Choudhary M."/>
            <person name="Donohue T.J."/>
            <person name="Kaplan S."/>
        </authorList>
    </citation>
    <scope>NUCLEOTIDE SEQUENCE [LARGE SCALE GENOMIC DNA]</scope>
    <source>
        <strain>ATCC 17025 / ATH 2.4.3</strain>
    </source>
</reference>
<proteinExistence type="inferred from homology"/>
<sequence>MTEHMRIPLAGVIGSPIAHSRSPALHGYWLKRYGLKGHYIPMDVAQADLREVLAAMPRMGFVGCNVTIPHKETVIALADIVTDRAALIGAANTLIFRKDGKIHADNTDGAGFTANLRQNAPDWQPQAAPAVVWGAGGAARAVIAALIEVGVPEIRLSNRSRARADALRSDFGAKVQVFDWVQAGNILEDATTVVNTTSLGMIGKPDFRVPLDALSPKAVVTDLVYTPLRTRLLAEAEAAGCRTVDGLGMLLHQAAPGFERWFGVRPEVDEDTRAAVLAT</sequence>
<protein>
    <recommendedName>
        <fullName evidence="1">Shikimate dehydrogenase (NADP(+))</fullName>
        <shortName evidence="1">SDH</shortName>
        <ecNumber evidence="1">1.1.1.25</ecNumber>
    </recommendedName>
</protein>